<keyword id="KW-0002">3D-structure</keyword>
<keyword id="KW-0520">NAD</keyword>
<keyword id="KW-0560">Oxidoreductase</keyword>
<keyword id="KW-1185">Reference proteome</keyword>
<keyword id="KW-0816">Tricarboxylic acid cycle</keyword>
<feature type="chain" id="PRO_0000113457" description="Malate dehydrogenase">
    <location>
        <begin position="1"/>
        <end position="320"/>
    </location>
</feature>
<feature type="active site" description="Proton acceptor" evidence="1">
    <location>
        <position position="176"/>
    </location>
</feature>
<feature type="binding site" evidence="1">
    <location>
        <begin position="10"/>
        <end position="15"/>
    </location>
    <ligand>
        <name>NAD(+)</name>
        <dbReference type="ChEBI" id="CHEBI:57540"/>
    </ligand>
</feature>
<feature type="binding site" evidence="1">
    <location>
        <position position="34"/>
    </location>
    <ligand>
        <name>NAD(+)</name>
        <dbReference type="ChEBI" id="CHEBI:57540"/>
    </ligand>
</feature>
<feature type="binding site" evidence="1">
    <location>
        <position position="83"/>
    </location>
    <ligand>
        <name>substrate</name>
    </ligand>
</feature>
<feature type="binding site" evidence="1">
    <location>
        <position position="89"/>
    </location>
    <ligand>
        <name>substrate</name>
    </ligand>
</feature>
<feature type="binding site" evidence="1">
    <location>
        <position position="96"/>
    </location>
    <ligand>
        <name>NAD(+)</name>
        <dbReference type="ChEBI" id="CHEBI:57540"/>
    </ligand>
</feature>
<feature type="binding site" evidence="1">
    <location>
        <begin position="119"/>
        <end position="121"/>
    </location>
    <ligand>
        <name>NAD(+)</name>
        <dbReference type="ChEBI" id="CHEBI:57540"/>
    </ligand>
</feature>
<feature type="binding site" evidence="1">
    <location>
        <position position="121"/>
    </location>
    <ligand>
        <name>substrate</name>
    </ligand>
</feature>
<feature type="binding site" evidence="1">
    <location>
        <position position="152"/>
    </location>
    <ligand>
        <name>substrate</name>
    </ligand>
</feature>
<feature type="sequence conflict" description="In Ref. 1; AAO24626." evidence="2" ref="1">
    <original>E</original>
    <variation>K</variation>
    <location>
        <position position="109"/>
    </location>
</feature>
<feature type="sequence conflict" description="In Ref. 1; AAO24626." evidence="2" ref="1">
    <original>T</original>
    <variation>A</variation>
    <location>
        <position position="120"/>
    </location>
</feature>
<feature type="strand" evidence="3">
    <location>
        <begin position="5"/>
        <end position="9"/>
    </location>
</feature>
<feature type="helix" evidence="3">
    <location>
        <begin position="13"/>
        <end position="24"/>
    </location>
</feature>
<feature type="strand" evidence="3">
    <location>
        <begin position="29"/>
        <end position="33"/>
    </location>
</feature>
<feature type="strand" evidence="4">
    <location>
        <begin position="35"/>
        <end position="38"/>
    </location>
</feature>
<feature type="helix" evidence="3">
    <location>
        <begin position="39"/>
        <end position="54"/>
    </location>
</feature>
<feature type="strand" evidence="3">
    <location>
        <begin position="60"/>
        <end position="65"/>
    </location>
</feature>
<feature type="helix" evidence="3">
    <location>
        <begin position="66"/>
        <end position="69"/>
    </location>
</feature>
<feature type="strand" evidence="3">
    <location>
        <begin position="73"/>
        <end position="77"/>
    </location>
</feature>
<feature type="helix" evidence="3">
    <location>
        <begin position="89"/>
        <end position="110"/>
    </location>
</feature>
<feature type="strand" evidence="3">
    <location>
        <begin position="115"/>
        <end position="118"/>
    </location>
</feature>
<feature type="helix" evidence="3">
    <location>
        <begin position="123"/>
        <end position="134"/>
    </location>
</feature>
<feature type="helix" evidence="3">
    <location>
        <begin position="138"/>
        <end position="140"/>
    </location>
</feature>
<feature type="strand" evidence="3">
    <location>
        <begin position="141"/>
        <end position="143"/>
    </location>
</feature>
<feature type="helix" evidence="3">
    <location>
        <begin position="146"/>
        <end position="161"/>
    </location>
</feature>
<feature type="helix" evidence="3">
    <location>
        <begin position="165"/>
        <end position="167"/>
    </location>
</feature>
<feature type="strand" evidence="3">
    <location>
        <begin position="172"/>
        <end position="174"/>
    </location>
</feature>
<feature type="helix" evidence="3">
    <location>
        <begin position="177"/>
        <end position="179"/>
    </location>
</feature>
<feature type="strand" evidence="3">
    <location>
        <begin position="180"/>
        <end position="182"/>
    </location>
</feature>
<feature type="helix" evidence="3">
    <location>
        <begin position="184"/>
        <end position="186"/>
    </location>
</feature>
<feature type="helix" evidence="3">
    <location>
        <begin position="194"/>
        <end position="199"/>
    </location>
</feature>
<feature type="helix" evidence="3">
    <location>
        <begin position="205"/>
        <end position="216"/>
    </location>
</feature>
<feature type="helix" evidence="3">
    <location>
        <begin position="218"/>
        <end position="226"/>
    </location>
</feature>
<feature type="strand" evidence="3">
    <location>
        <begin position="227"/>
        <end position="229"/>
    </location>
</feature>
<feature type="helix" evidence="3">
    <location>
        <begin position="233"/>
        <end position="247"/>
    </location>
</feature>
<feature type="strand" evidence="3">
    <location>
        <begin position="252"/>
        <end position="262"/>
    </location>
</feature>
<feature type="helix" evidence="3">
    <location>
        <begin position="263"/>
        <end position="265"/>
    </location>
</feature>
<feature type="strand" evidence="3">
    <location>
        <begin position="267"/>
        <end position="278"/>
    </location>
</feature>
<feature type="strand" evidence="3">
    <location>
        <begin position="281"/>
        <end position="285"/>
    </location>
</feature>
<feature type="helix" evidence="3">
    <location>
        <begin position="292"/>
        <end position="314"/>
    </location>
</feature>
<proteinExistence type="evidence at protein level"/>
<reference key="1">
    <citation type="journal article" date="2003" name="J. Bacteriol.">
        <title>Methylotrophy in Methylobacterium extorquens AM1 from a genomic point of view.</title>
        <authorList>
            <person name="Chistoserdova L."/>
            <person name="Chen S.-W."/>
            <person name="Lapidus A."/>
            <person name="Lidstrom M.E."/>
        </authorList>
    </citation>
    <scope>NUCLEOTIDE SEQUENCE [GENOMIC DNA]</scope>
</reference>
<reference key="2">
    <citation type="journal article" date="2009" name="PLoS ONE">
        <title>Methylobacterium genome sequences: a reference blueprint to investigate microbial metabolism of C1 compounds from natural and industrial sources.</title>
        <authorList>
            <person name="Vuilleumier S."/>
            <person name="Chistoserdova L."/>
            <person name="Lee M.-C."/>
            <person name="Bringel F."/>
            <person name="Lajus A."/>
            <person name="Zhou Y."/>
            <person name="Gourion B."/>
            <person name="Barbe V."/>
            <person name="Chang J."/>
            <person name="Cruveiller S."/>
            <person name="Dossat C."/>
            <person name="Gillett W."/>
            <person name="Gruffaz C."/>
            <person name="Haugen E."/>
            <person name="Hourcade E."/>
            <person name="Levy R."/>
            <person name="Mangenot S."/>
            <person name="Muller E."/>
            <person name="Nadalig T."/>
            <person name="Pagni M."/>
            <person name="Penny C."/>
            <person name="Peyraud R."/>
            <person name="Robinson D.G."/>
            <person name="Roche D."/>
            <person name="Rouy Z."/>
            <person name="Saenampechek C."/>
            <person name="Salvignol G."/>
            <person name="Vallenet D."/>
            <person name="Wu Z."/>
            <person name="Marx C.J."/>
            <person name="Vorholt J.A."/>
            <person name="Olson M.V."/>
            <person name="Kaul R."/>
            <person name="Weissenbach J."/>
            <person name="Medigue C."/>
            <person name="Lidstrom M.E."/>
        </authorList>
    </citation>
    <scope>NUCLEOTIDE SEQUENCE [LARGE SCALE GENOMIC DNA]</scope>
    <source>
        <strain>ATCC 14718 / DSM 1338 / JCM 2805 / NCIMB 9133 / AM1</strain>
    </source>
</reference>
<protein>
    <recommendedName>
        <fullName evidence="1">Malate dehydrogenase</fullName>
        <ecNumber evidence="1">1.1.1.37</ecNumber>
    </recommendedName>
</protein>
<evidence type="ECO:0000255" key="1">
    <source>
        <dbReference type="HAMAP-Rule" id="MF_00487"/>
    </source>
</evidence>
<evidence type="ECO:0000305" key="2"/>
<evidence type="ECO:0007829" key="3">
    <source>
        <dbReference type="PDB" id="5UJK"/>
    </source>
</evidence>
<evidence type="ECO:0007829" key="4">
    <source>
        <dbReference type="PDB" id="5ULV"/>
    </source>
</evidence>
<accession>Q84FY8</accession>
<accession>C5B049</accession>
<organism>
    <name type="scientific">Methylorubrum extorquens (strain ATCC 14718 / DSM 1338 / JCM 2805 / NCIMB 9133 / AM1)</name>
    <name type="common">Methylobacterium extorquens</name>
    <dbReference type="NCBI Taxonomy" id="272630"/>
    <lineage>
        <taxon>Bacteria</taxon>
        <taxon>Pseudomonadati</taxon>
        <taxon>Pseudomonadota</taxon>
        <taxon>Alphaproteobacteria</taxon>
        <taxon>Hyphomicrobiales</taxon>
        <taxon>Methylobacteriaceae</taxon>
        <taxon>Methylorubrum</taxon>
    </lineage>
</organism>
<comment type="function">
    <text evidence="1">Catalyzes the reversible oxidation of malate to oxaloacetate.</text>
</comment>
<comment type="catalytic activity">
    <reaction evidence="1">
        <text>(S)-malate + NAD(+) = oxaloacetate + NADH + H(+)</text>
        <dbReference type="Rhea" id="RHEA:21432"/>
        <dbReference type="ChEBI" id="CHEBI:15378"/>
        <dbReference type="ChEBI" id="CHEBI:15589"/>
        <dbReference type="ChEBI" id="CHEBI:16452"/>
        <dbReference type="ChEBI" id="CHEBI:57540"/>
        <dbReference type="ChEBI" id="CHEBI:57945"/>
        <dbReference type="EC" id="1.1.1.37"/>
    </reaction>
</comment>
<comment type="similarity">
    <text evidence="1">Belongs to the LDH/MDH superfamily. MDH type 3 family.</text>
</comment>
<name>MDH_METEA</name>
<dbReference type="EC" id="1.1.1.37" evidence="1"/>
<dbReference type="EMBL" id="AY181040">
    <property type="protein sequence ID" value="AAO24626.1"/>
    <property type="molecule type" value="Genomic_DNA"/>
</dbReference>
<dbReference type="EMBL" id="CP001510">
    <property type="protein sequence ID" value="ACS39399.1"/>
    <property type="molecule type" value="Genomic_DNA"/>
</dbReference>
<dbReference type="RefSeq" id="WP_003599890.1">
    <property type="nucleotide sequence ID" value="NC_012808.1"/>
</dbReference>
<dbReference type="PDB" id="5UJK">
    <property type="method" value="X-ray"/>
    <property type="resolution" value="1.53 A"/>
    <property type="chains" value="A=1-320"/>
</dbReference>
<dbReference type="PDB" id="5ULV">
    <property type="method" value="X-ray"/>
    <property type="resolution" value="1.66 A"/>
    <property type="chains" value="A=1-320"/>
</dbReference>
<dbReference type="PDBsum" id="5UJK"/>
<dbReference type="PDBsum" id="5ULV"/>
<dbReference type="SMR" id="Q84FY8"/>
<dbReference type="STRING" id="272630.MexAM1_META1p1537"/>
<dbReference type="KEGG" id="mea:Mex_1p1537"/>
<dbReference type="eggNOG" id="COG0039">
    <property type="taxonomic scope" value="Bacteria"/>
</dbReference>
<dbReference type="HOGENOM" id="CLU_045401_2_1_5"/>
<dbReference type="OrthoDB" id="9802969at2"/>
<dbReference type="BioCyc" id="MetaCyc:MONOMER-4226"/>
<dbReference type="BRENDA" id="1.1.1.37">
    <property type="organism ID" value="3296"/>
</dbReference>
<dbReference type="Proteomes" id="UP000009081">
    <property type="component" value="Chromosome"/>
</dbReference>
<dbReference type="GO" id="GO:0004459">
    <property type="term" value="F:L-lactate dehydrogenase activity"/>
    <property type="evidence" value="ECO:0007669"/>
    <property type="project" value="TreeGrafter"/>
</dbReference>
<dbReference type="GO" id="GO:0030060">
    <property type="term" value="F:L-malate dehydrogenase (NAD+) activity"/>
    <property type="evidence" value="ECO:0007669"/>
    <property type="project" value="UniProtKB-UniRule"/>
</dbReference>
<dbReference type="GO" id="GO:0006089">
    <property type="term" value="P:lactate metabolic process"/>
    <property type="evidence" value="ECO:0007669"/>
    <property type="project" value="TreeGrafter"/>
</dbReference>
<dbReference type="GO" id="GO:0006099">
    <property type="term" value="P:tricarboxylic acid cycle"/>
    <property type="evidence" value="ECO:0007669"/>
    <property type="project" value="UniProtKB-UniRule"/>
</dbReference>
<dbReference type="CDD" id="cd01339">
    <property type="entry name" value="LDH-like_MDH"/>
    <property type="match status" value="1"/>
</dbReference>
<dbReference type="FunFam" id="3.40.50.720:FF:000018">
    <property type="entry name" value="Malate dehydrogenase"/>
    <property type="match status" value="1"/>
</dbReference>
<dbReference type="FunFam" id="3.90.110.10:FF:000004">
    <property type="entry name" value="Malate dehydrogenase"/>
    <property type="match status" value="1"/>
</dbReference>
<dbReference type="Gene3D" id="3.90.110.10">
    <property type="entry name" value="Lactate dehydrogenase/glycoside hydrolase, family 4, C-terminal"/>
    <property type="match status" value="1"/>
</dbReference>
<dbReference type="Gene3D" id="3.40.50.720">
    <property type="entry name" value="NAD(P)-binding Rossmann-like Domain"/>
    <property type="match status" value="1"/>
</dbReference>
<dbReference type="HAMAP" id="MF_00487">
    <property type="entry name" value="Malate_dehydrog_3"/>
    <property type="match status" value="1"/>
</dbReference>
<dbReference type="InterPro" id="IPR001557">
    <property type="entry name" value="L-lactate/malate_DH"/>
</dbReference>
<dbReference type="InterPro" id="IPR022383">
    <property type="entry name" value="Lactate/malate_DH_C"/>
</dbReference>
<dbReference type="InterPro" id="IPR001236">
    <property type="entry name" value="Lactate/malate_DH_N"/>
</dbReference>
<dbReference type="InterPro" id="IPR015955">
    <property type="entry name" value="Lactate_DH/Glyco_Ohase_4_C"/>
</dbReference>
<dbReference type="InterPro" id="IPR011275">
    <property type="entry name" value="Malate_DH_type3"/>
</dbReference>
<dbReference type="InterPro" id="IPR036291">
    <property type="entry name" value="NAD(P)-bd_dom_sf"/>
</dbReference>
<dbReference type="NCBIfam" id="TIGR01763">
    <property type="entry name" value="MalateDH_bact"/>
    <property type="match status" value="1"/>
</dbReference>
<dbReference type="NCBIfam" id="NF004863">
    <property type="entry name" value="PRK06223.1"/>
    <property type="match status" value="1"/>
</dbReference>
<dbReference type="PANTHER" id="PTHR43128">
    <property type="entry name" value="L-2-HYDROXYCARBOXYLATE DEHYDROGENASE (NAD(P)(+))"/>
    <property type="match status" value="1"/>
</dbReference>
<dbReference type="PANTHER" id="PTHR43128:SF16">
    <property type="entry name" value="L-LACTATE DEHYDROGENASE"/>
    <property type="match status" value="1"/>
</dbReference>
<dbReference type="Pfam" id="PF02866">
    <property type="entry name" value="Ldh_1_C"/>
    <property type="match status" value="1"/>
</dbReference>
<dbReference type="Pfam" id="PF00056">
    <property type="entry name" value="Ldh_1_N"/>
    <property type="match status" value="1"/>
</dbReference>
<dbReference type="PIRSF" id="PIRSF000102">
    <property type="entry name" value="Lac_mal_DH"/>
    <property type="match status" value="1"/>
</dbReference>
<dbReference type="PRINTS" id="PR00086">
    <property type="entry name" value="LLDHDRGNASE"/>
</dbReference>
<dbReference type="SUPFAM" id="SSF56327">
    <property type="entry name" value="LDH C-terminal domain-like"/>
    <property type="match status" value="1"/>
</dbReference>
<dbReference type="SUPFAM" id="SSF51735">
    <property type="entry name" value="NAD(P)-binding Rossmann-fold domains"/>
    <property type="match status" value="1"/>
</dbReference>
<gene>
    <name evidence="1" type="primary">mdh</name>
    <name type="ordered locus">MexAM1_META1p1537</name>
</gene>
<sequence>MARSKIALIGAGQIGGTLAHLAGLKELGDVVLFDIVDGVPQGKALDIAESAPVDGFDAKYSGASDYSAIAGADVVIVTAGVPRKPGMSRDDLIGINLKVMEAVGAGIKEHAPDAFVICITNPLDAMVWALQKFSGLPTNKVVGMAGVLDSARFRHFLAEEFGVSVEDVTAFVLGGHGDDMVPLTRYSTVAGVPLTDLVKLGWTTQEKLDAMVERTRKGGGEIVNLLKTGSAFYAPAASAIAMAESYLRDKKRVLPCAAYLDGQYGIDGLYVGVPVVIGENGVERVLEVTFNDDEKAMFEKSVNSVKGLIEACKSVNDKLA</sequence>